<sequence length="370" mass="41616">MLGQVVTLILLLLLKVYQGKGCQGSADHVVSISGVPLQLQPNSIQTKVDSIAWKKLLPSQNGFHHILKWENGSLPSNTSNDRFSFIVKNLSLLIKAAQQQDSGLYCLEVTSISGKVQTATFQVFVFESLLPDKVEKPRLQGQGKILDRGRCQVALSCLVSRDGNVSYAWYRGSKLIQTAGNLTYLDEEVDINGTHTYTCNVSNPVSWESHTLNLTQDCQNAHQEFRFWPFLVIIVILSALFLGTLACFCVWRRKRKEKQSETSPKEFLTIYEDVKDLKTRRNHEQEQTFPGGGSTIYSMIQSQSSAPTSQEPAYTLYSLIQPSRKSGSRKRNHSPSFNSTIYEVIGKSQPKAQNPARLSRKELENFDVYS</sequence>
<proteinExistence type="evidence at protein level"/>
<organism>
    <name type="scientific">Homo sapiens</name>
    <name type="common">Human</name>
    <dbReference type="NCBI Taxonomy" id="9606"/>
    <lineage>
        <taxon>Eukaryota</taxon>
        <taxon>Metazoa</taxon>
        <taxon>Chordata</taxon>
        <taxon>Craniata</taxon>
        <taxon>Vertebrata</taxon>
        <taxon>Euteleostomi</taxon>
        <taxon>Mammalia</taxon>
        <taxon>Eutheria</taxon>
        <taxon>Euarchontoglires</taxon>
        <taxon>Primates</taxon>
        <taxon>Haplorrhini</taxon>
        <taxon>Catarrhini</taxon>
        <taxon>Hominidae</taxon>
        <taxon>Homo</taxon>
    </lineage>
</organism>
<evidence type="ECO:0000250" key="1">
    <source>
        <dbReference type="UniProtKB" id="Q07763"/>
    </source>
</evidence>
<evidence type="ECO:0000250" key="2">
    <source>
        <dbReference type="UniProtKB" id="Q13291"/>
    </source>
</evidence>
<evidence type="ECO:0000255" key="3"/>
<evidence type="ECO:0000255" key="4">
    <source>
        <dbReference type="PROSITE-ProRule" id="PRU00114"/>
    </source>
</evidence>
<evidence type="ECO:0000256" key="5">
    <source>
        <dbReference type="SAM" id="MobiDB-lite"/>
    </source>
</evidence>
<evidence type="ECO:0000269" key="6">
    <source>
    </source>
</evidence>
<evidence type="ECO:0000269" key="7">
    <source>
    </source>
</evidence>
<evidence type="ECO:0000269" key="8">
    <source>
    </source>
</evidence>
<evidence type="ECO:0000269" key="9">
    <source>
    </source>
</evidence>
<evidence type="ECO:0000269" key="10">
    <source>
    </source>
</evidence>
<evidence type="ECO:0000269" key="11">
    <source>
    </source>
</evidence>
<evidence type="ECO:0000269" key="12">
    <source>
    </source>
</evidence>
<evidence type="ECO:0000269" key="13">
    <source>
    </source>
</evidence>
<evidence type="ECO:0000269" key="14">
    <source>
    </source>
</evidence>
<evidence type="ECO:0000269" key="15">
    <source>
    </source>
</evidence>
<evidence type="ECO:0000269" key="16">
    <source>
    </source>
</evidence>
<evidence type="ECO:0000269" key="17">
    <source>
    </source>
</evidence>
<evidence type="ECO:0000269" key="18">
    <source>
    </source>
</evidence>
<evidence type="ECO:0000269" key="19">
    <source>
    </source>
</evidence>
<evidence type="ECO:0000269" key="20">
    <source>
    </source>
</evidence>
<evidence type="ECO:0000269" key="21">
    <source>
    </source>
</evidence>
<evidence type="ECO:0000269" key="22">
    <source>
    </source>
</evidence>
<evidence type="ECO:0000269" key="23">
    <source>
    </source>
</evidence>
<evidence type="ECO:0000269" key="24">
    <source>
    </source>
</evidence>
<evidence type="ECO:0000269" key="25">
    <source>
    </source>
</evidence>
<evidence type="ECO:0000269" key="26">
    <source>
    </source>
</evidence>
<evidence type="ECO:0000303" key="27">
    <source>
    </source>
</evidence>
<evidence type="ECO:0000303" key="28">
    <source>
    </source>
</evidence>
<evidence type="ECO:0000303" key="29">
    <source>
    </source>
</evidence>
<evidence type="ECO:0000303" key="30">
    <source>
    </source>
</evidence>
<evidence type="ECO:0000303" key="31">
    <source>
    </source>
</evidence>
<evidence type="ECO:0000303" key="32">
    <source>
    </source>
</evidence>
<evidence type="ECO:0000303" key="33">
    <source ref="7"/>
</evidence>
<evidence type="ECO:0000305" key="34"/>
<evidence type="ECO:0000305" key="35">
    <source>
    </source>
</evidence>
<evidence type="ECO:0000305" key="36">
    <source>
    </source>
</evidence>
<evidence type="ECO:0000305" key="37">
    <source>
    </source>
</evidence>
<evidence type="ECO:0000305" key="38">
    <source>
    </source>
</evidence>
<reference key="1">
    <citation type="journal article" date="1999" name="Eur. J. Immunol.">
        <title>Activating interactions in human NK cell recognition: the role of 2B4-CD48.</title>
        <authorList>
            <person name="Nakajima H."/>
            <person name="Cella M."/>
            <person name="Langen H."/>
            <person name="Friedlein A."/>
            <person name="Colonna M."/>
        </authorList>
    </citation>
    <scope>NUCLEOTIDE SEQUENCE [MRNA] (ISOFORM 2)</scope>
    <scope>FUNCTION</scope>
    <scope>INTERACTION WITH CD48</scope>
    <scope>SUBCELLULAR LOCATION</scope>
</reference>
<reference key="2">
    <citation type="journal article" date="1999" name="Eur. J. Immunol.">
        <title>Molecular cloning and biological characterization of NK cell activation-inducing ligand, a counterstructure for CD48.</title>
        <authorList>
            <person name="Kubin M.Z."/>
            <person name="Parshley D.L."/>
            <person name="Din W."/>
            <person name="Waugh J.Y."/>
            <person name="Davis-Smith T."/>
            <person name="Smith C.A."/>
            <person name="Macduff B.M."/>
            <person name="Armitage R.J."/>
            <person name="Chin W."/>
            <person name="Cassiano L."/>
            <person name="Borges L."/>
            <person name="Petersen M."/>
            <person name="Trinchieri G."/>
            <person name="Goodwin R.G."/>
        </authorList>
    </citation>
    <scope>NUCLEOTIDE SEQUENCE [MRNA] (ISOFORM 2)</scope>
    <scope>PROTEIN SEQUENCE OF N-TERMINUS</scope>
    <scope>TISSUE SPECIFICITY</scope>
    <scope>INTERACTION WITH CD48</scope>
</reference>
<reference key="3">
    <citation type="journal article" date="1999" name="J. Immunol.">
        <title>Human 2B4, an activating NK cell receptor, recruits the protein tyrosine phosphatase SHP-2 and the adaptor signaling protein SAP.</title>
        <authorList>
            <person name="Tangye S.G."/>
            <person name="Lazetic S."/>
            <person name="Woollatt E."/>
            <person name="Sutherland G.R."/>
            <person name="Lanier L.L."/>
            <person name="Phillips J.H."/>
        </authorList>
    </citation>
    <scope>NUCLEOTIDE SEQUENCE [MRNA] (ISOFORM 2)</scope>
    <scope>PHOSPHORYLATION</scope>
    <scope>INTERACTION WITH SH2D1A AND PTPN11</scope>
</reference>
<reference key="4">
    <citation type="journal article" date="1999" name="Tissue Antigens">
        <title>Molecular characterization of a novel human natural killer cell receptor homologous to mouse 2B4.</title>
        <authorList>
            <person name="Boles K.S."/>
            <person name="Nakajima H."/>
            <person name="Colonna M."/>
            <person name="Chuang S.S."/>
            <person name="Stepp S.E."/>
            <person name="Bennett M."/>
            <person name="Kumar V."/>
            <person name="Mathew P.A."/>
        </authorList>
    </citation>
    <scope>NUCLEOTIDE SEQUENCE [MRNA] (ISOFORM 2)</scope>
    <scope>INTERACTION WITH CD48</scope>
    <source>
        <tissue>Natural killer cell</tissue>
    </source>
</reference>
<reference key="5">
    <citation type="journal article" date="2000" name="Immunogenetics">
        <title>Structure of the human natural killer cell receptor 2B4 gene and identification of a novel alternative transcript.</title>
        <authorList>
            <person name="Kumaresan P.R."/>
            <person name="Mathew P.A."/>
        </authorList>
    </citation>
    <scope>NUCLEOTIDE SEQUENCE [MRNA] (ISOFORM 1)</scope>
</reference>
<reference key="6">
    <citation type="journal article" date="2000" name="J. Exp. Med.">
        <title>X-linked lymphoproliferative disease: 2B4 molecules displaying inhibitory rather than activating function are responsible for the inability of natural killer cells to kill Epstein-Barr virus-infected cells.</title>
        <authorList>
            <person name="Parolini S."/>
            <person name="Bottino C."/>
            <person name="Falco M."/>
            <person name="Augugliaro R."/>
            <person name="Giliani S."/>
            <person name="Franceschini R."/>
            <person name="Ochs H.D."/>
            <person name="Wolf H."/>
            <person name="Bonnefoy J.-Y."/>
            <person name="Biassoni R."/>
            <person name="Moretta L."/>
            <person name="Notarangelo L.D."/>
            <person name="Moretta A."/>
        </authorList>
    </citation>
    <scope>NUCLEOTIDE SEQUENCE [MRNA] (ISOFORMS 3 AND 4)</scope>
    <scope>FUNCTION</scope>
    <scope>INTERACTION WITH INPP5D</scope>
    <source>
        <tissue>Lymphoid tissue</tissue>
    </source>
</reference>
<reference key="7">
    <citation type="submission" date="1999-07" db="EMBL/GenBank/DDBJ databases">
        <title>Activating NK receptor homolog to the murine 2B4.</title>
        <authorList>
            <person name="Biassoni R."/>
            <person name="Falco M."/>
        </authorList>
    </citation>
    <scope>NUCLEOTIDE SEQUENCE [MRNA] (ISOFORM 2)</scope>
    <source>
        <tissue>Lymphoid tissue</tissue>
    </source>
</reference>
<reference key="8">
    <citation type="journal article" date="2006" name="Nature">
        <title>The DNA sequence and biological annotation of human chromosome 1.</title>
        <authorList>
            <person name="Gregory S.G."/>
            <person name="Barlow K.F."/>
            <person name="McLay K.E."/>
            <person name="Kaul R."/>
            <person name="Swarbreck D."/>
            <person name="Dunham A."/>
            <person name="Scott C.E."/>
            <person name="Howe K.L."/>
            <person name="Woodfine K."/>
            <person name="Spencer C.C.A."/>
            <person name="Jones M.C."/>
            <person name="Gillson C."/>
            <person name="Searle S."/>
            <person name="Zhou Y."/>
            <person name="Kokocinski F."/>
            <person name="McDonald L."/>
            <person name="Evans R."/>
            <person name="Phillips K."/>
            <person name="Atkinson A."/>
            <person name="Cooper R."/>
            <person name="Jones C."/>
            <person name="Hall R.E."/>
            <person name="Andrews T.D."/>
            <person name="Lloyd C."/>
            <person name="Ainscough R."/>
            <person name="Almeida J.P."/>
            <person name="Ambrose K.D."/>
            <person name="Anderson F."/>
            <person name="Andrew R.W."/>
            <person name="Ashwell R.I.S."/>
            <person name="Aubin K."/>
            <person name="Babbage A.K."/>
            <person name="Bagguley C.L."/>
            <person name="Bailey J."/>
            <person name="Beasley H."/>
            <person name="Bethel G."/>
            <person name="Bird C.P."/>
            <person name="Bray-Allen S."/>
            <person name="Brown J.Y."/>
            <person name="Brown A.J."/>
            <person name="Buckley D."/>
            <person name="Burton J."/>
            <person name="Bye J."/>
            <person name="Carder C."/>
            <person name="Chapman J.C."/>
            <person name="Clark S.Y."/>
            <person name="Clarke G."/>
            <person name="Clee C."/>
            <person name="Cobley V."/>
            <person name="Collier R.E."/>
            <person name="Corby N."/>
            <person name="Coville G.J."/>
            <person name="Davies J."/>
            <person name="Deadman R."/>
            <person name="Dunn M."/>
            <person name="Earthrowl M."/>
            <person name="Ellington A.G."/>
            <person name="Errington H."/>
            <person name="Frankish A."/>
            <person name="Frankland J."/>
            <person name="French L."/>
            <person name="Garner P."/>
            <person name="Garnett J."/>
            <person name="Gay L."/>
            <person name="Ghori M.R.J."/>
            <person name="Gibson R."/>
            <person name="Gilby L.M."/>
            <person name="Gillett W."/>
            <person name="Glithero R.J."/>
            <person name="Grafham D.V."/>
            <person name="Griffiths C."/>
            <person name="Griffiths-Jones S."/>
            <person name="Grocock R."/>
            <person name="Hammond S."/>
            <person name="Harrison E.S.I."/>
            <person name="Hart E."/>
            <person name="Haugen E."/>
            <person name="Heath P.D."/>
            <person name="Holmes S."/>
            <person name="Holt K."/>
            <person name="Howden P.J."/>
            <person name="Hunt A.R."/>
            <person name="Hunt S.E."/>
            <person name="Hunter G."/>
            <person name="Isherwood J."/>
            <person name="James R."/>
            <person name="Johnson C."/>
            <person name="Johnson D."/>
            <person name="Joy A."/>
            <person name="Kay M."/>
            <person name="Kershaw J.K."/>
            <person name="Kibukawa M."/>
            <person name="Kimberley A.M."/>
            <person name="King A."/>
            <person name="Knights A.J."/>
            <person name="Lad H."/>
            <person name="Laird G."/>
            <person name="Lawlor S."/>
            <person name="Leongamornlert D.A."/>
            <person name="Lloyd D.M."/>
            <person name="Loveland J."/>
            <person name="Lovell J."/>
            <person name="Lush M.J."/>
            <person name="Lyne R."/>
            <person name="Martin S."/>
            <person name="Mashreghi-Mohammadi M."/>
            <person name="Matthews L."/>
            <person name="Matthews N.S.W."/>
            <person name="McLaren S."/>
            <person name="Milne S."/>
            <person name="Mistry S."/>
            <person name="Moore M.J.F."/>
            <person name="Nickerson T."/>
            <person name="O'Dell C.N."/>
            <person name="Oliver K."/>
            <person name="Palmeiri A."/>
            <person name="Palmer S.A."/>
            <person name="Parker A."/>
            <person name="Patel D."/>
            <person name="Pearce A.V."/>
            <person name="Peck A.I."/>
            <person name="Pelan S."/>
            <person name="Phelps K."/>
            <person name="Phillimore B.J."/>
            <person name="Plumb R."/>
            <person name="Rajan J."/>
            <person name="Raymond C."/>
            <person name="Rouse G."/>
            <person name="Saenphimmachak C."/>
            <person name="Sehra H.K."/>
            <person name="Sheridan E."/>
            <person name="Shownkeen R."/>
            <person name="Sims S."/>
            <person name="Skuce C.D."/>
            <person name="Smith M."/>
            <person name="Steward C."/>
            <person name="Subramanian S."/>
            <person name="Sycamore N."/>
            <person name="Tracey A."/>
            <person name="Tromans A."/>
            <person name="Van Helmond Z."/>
            <person name="Wall M."/>
            <person name="Wallis J.M."/>
            <person name="White S."/>
            <person name="Whitehead S.L."/>
            <person name="Wilkinson J.E."/>
            <person name="Willey D.L."/>
            <person name="Williams H."/>
            <person name="Wilming L."/>
            <person name="Wray P.W."/>
            <person name="Wu Z."/>
            <person name="Coulson A."/>
            <person name="Vaudin M."/>
            <person name="Sulston J.E."/>
            <person name="Durbin R.M."/>
            <person name="Hubbard T."/>
            <person name="Wooster R."/>
            <person name="Dunham I."/>
            <person name="Carter N.P."/>
            <person name="McVean G."/>
            <person name="Ross M.T."/>
            <person name="Harrow J."/>
            <person name="Olson M.V."/>
            <person name="Beck S."/>
            <person name="Rogers J."/>
            <person name="Bentley D.R."/>
        </authorList>
    </citation>
    <scope>NUCLEOTIDE SEQUENCE [LARGE SCALE GENOMIC DNA]</scope>
</reference>
<reference key="9">
    <citation type="submission" date="2005-09" db="EMBL/GenBank/DDBJ databases">
        <authorList>
            <person name="Mural R.J."/>
            <person name="Istrail S."/>
            <person name="Sutton G.G."/>
            <person name="Florea L."/>
            <person name="Halpern A.L."/>
            <person name="Mobarry C.M."/>
            <person name="Lippert R."/>
            <person name="Walenz B."/>
            <person name="Shatkay H."/>
            <person name="Dew I."/>
            <person name="Miller J.R."/>
            <person name="Flanigan M.J."/>
            <person name="Edwards N.J."/>
            <person name="Bolanos R."/>
            <person name="Fasulo D."/>
            <person name="Halldorsson B.V."/>
            <person name="Hannenhalli S."/>
            <person name="Turner R."/>
            <person name="Yooseph S."/>
            <person name="Lu F."/>
            <person name="Nusskern D.R."/>
            <person name="Shue B.C."/>
            <person name="Zheng X.H."/>
            <person name="Zhong F."/>
            <person name="Delcher A.L."/>
            <person name="Huson D.H."/>
            <person name="Kravitz S.A."/>
            <person name="Mouchard L."/>
            <person name="Reinert K."/>
            <person name="Remington K.A."/>
            <person name="Clark A.G."/>
            <person name="Waterman M.S."/>
            <person name="Eichler E.E."/>
            <person name="Adams M.D."/>
            <person name="Hunkapiller M.W."/>
            <person name="Myers E.W."/>
            <person name="Venter J.C."/>
        </authorList>
    </citation>
    <scope>NUCLEOTIDE SEQUENCE [LARGE SCALE GENOMIC DNA]</scope>
</reference>
<reference key="10">
    <citation type="journal article" date="2004" name="Genome Res.">
        <title>The status, quality, and expansion of the NIH full-length cDNA project: the Mammalian Gene Collection (MGC).</title>
        <authorList>
            <consortium name="The MGC Project Team"/>
        </authorList>
    </citation>
    <scope>NUCLEOTIDE SEQUENCE [LARGE SCALE MRNA] (ISOFORM 2)</scope>
    <source>
        <tissue>Blood</tissue>
    </source>
</reference>
<reference key="11">
    <citation type="submission" date="2001-03" db="EMBL/GenBank/DDBJ databases">
        <authorList>
            <person name="Lennon G.P."/>
            <person name="Eccleston D.W."/>
            <person name="Pridgeon C."/>
            <person name="Pazmany L."/>
            <person name="Moots R.J."/>
        </authorList>
    </citation>
    <scope>NUCLEOTIDE SEQUENCE [MRNA] OF 28-133</scope>
</reference>
<reference key="12">
    <citation type="journal article" date="2004" name="Protein Sci.">
        <title>Signal peptide prediction based on analysis of experimentally verified cleavage sites.</title>
        <authorList>
            <person name="Zhang Z."/>
            <person name="Henzel W.J."/>
        </authorList>
    </citation>
    <scope>PROTEIN SEQUENCE OF 22-36</scope>
</reference>
<reference key="13">
    <citation type="journal article" date="1993" name="J. Exp. Med.">
        <title>Identification of a novel signal transduction surface molecule on human cytotoxic lymphocytes.</title>
        <authorList>
            <person name="Valiante N.M."/>
            <person name="Trinchieri G."/>
        </authorList>
    </citation>
    <scope>FUNCTION</scope>
    <scope>TISSUE SPECIFICITY</scope>
</reference>
<reference key="14">
    <citation type="journal article" date="1998" name="J. Exp. Med.">
        <title>2B4, the natural killer and T cell immunoglobulin superfamily surface protein, is a ligand for CD48.</title>
        <authorList>
            <person name="Brown M.H."/>
            <person name="Boles K."/>
            <person name="van der Merwe P.A."/>
            <person name="Kumar V."/>
            <person name="Mathew P.A."/>
            <person name="Barclay A.N."/>
        </authorList>
    </citation>
    <scope>INTERACTION WITH CD48</scope>
</reference>
<reference key="15">
    <citation type="journal article" date="2000" name="Eur. J. Immunol.">
        <title>2B4 functions as a co-receptor in human NK cell activation.</title>
        <authorList>
            <person name="Sivori S."/>
            <person name="Parolini S."/>
            <person name="Falco M."/>
            <person name="Marcenaro E."/>
            <person name="Biassoni R."/>
            <person name="Bottino C."/>
            <person name="Moretta L."/>
            <person name="Moretta A."/>
        </authorList>
    </citation>
    <scope>FUNCTION</scope>
</reference>
<reference key="16">
    <citation type="journal article" date="2000" name="J. Immunol.">
        <title>NK cell inhibitory receptors prevent tyrosine phosphorylation of the activation receptor 2B4 (CD244).</title>
        <authorList>
            <person name="Watzl C."/>
            <person name="Stebbins C.C."/>
            <person name="Long E.O."/>
        </authorList>
    </citation>
    <scope>PHOSPHORYLATION</scope>
    <scope>SUBCELLULAR LOCATION</scope>
</reference>
<reference key="17">
    <citation type="journal article" date="2001" name="J. Immunol.">
        <title>The activatory receptor 2B4 is expressed in vivo by human CD8+ effector alpha beta T cells.</title>
        <authorList>
            <person name="Speiser D.E."/>
            <person name="Colonna M."/>
            <person name="Ayyoub M."/>
            <person name="Cella M."/>
            <person name="Pittet M.J."/>
            <person name="Batard P."/>
            <person name="Valmori D."/>
            <person name="Guillaume P."/>
            <person name="Lienard D."/>
            <person name="Cerottini J.C."/>
            <person name="Romero P."/>
        </authorList>
    </citation>
    <scope>FUNCTION</scope>
    <scope>TISSUE SPECIFICITY</scope>
</reference>
<reference key="18">
    <citation type="journal article" date="2002" name="J. Biol. Chem.">
        <title>Association of the X-linked lymphoproliferative disease gene product SAP/SH2D1A with 2B4, a natural killer cell-activating molecule, is dependent on phosphoinositide 3-kinase.</title>
        <authorList>
            <person name="Aoukaty A."/>
            <person name="Tan R."/>
        </authorList>
    </citation>
    <scope>INTERACTION WITH PIK3R1</scope>
</reference>
<reference key="19">
    <citation type="journal article" date="2002" name="Proc. Natl. Acad. Sci. U.S.A.">
        <title>Early expression of triggering receptors and regulatory role of 2B4 in human natural killer cell precursors undergoing in vitro differentiation.</title>
        <authorList>
            <person name="Sivori S."/>
            <person name="Falco M."/>
            <person name="Marcenaro E."/>
            <person name="Parolini S."/>
            <person name="Biassoni R."/>
            <person name="Bottino C."/>
            <person name="Moretta L."/>
            <person name="Moretta A."/>
        </authorList>
    </citation>
    <scope>FUNCTION</scope>
</reference>
<reference key="20">
    <citation type="journal article" date="2003" name="J. Biol. Chem.">
        <title>Dual functional roles for the X-linked lymphoproliferative syndrome gene product SAP/SH2D1A in signaling through the signaling lymphocyte activation molecule (SLAM) family of immune receptors.</title>
        <authorList>
            <person name="Li C."/>
            <person name="Iosef C."/>
            <person name="Jia C.Y."/>
            <person name="Han V.K."/>
            <person name="Li S.S."/>
        </authorList>
    </citation>
    <scope>INTERACTION WITH SH2D1A; SH2D1B; INPP5D AND PTPN11</scope>
    <scope>PHOSPHORYLATION AT TYR-271; TYR-297; TYR-317 AND TYR-342</scope>
</reference>
<reference key="21">
    <citation type="journal article" date="2005" name="Blood">
        <title>Molecular basis for positive and negative signaling by the natural killer cell receptor 2B4 (CD244).</title>
        <authorList>
            <person name="Eissmann P."/>
            <person name="Beauchamp L."/>
            <person name="Wooters J."/>
            <person name="Tilton J.C."/>
            <person name="Long E.O."/>
            <person name="Watzl C."/>
        </authorList>
    </citation>
    <scope>FUNCTION</scope>
    <scope>DOMAIN ITSM MOTIF</scope>
    <scope>INTERACTION WITH INPP5D; PTPN11; PTPN6; CSK; FYN AND SH2D1A</scope>
    <scope>PHOSPHORYLATION AT TYR-271; TYR-297; TYR-317 AND TYR-342</scope>
</reference>
<reference key="22">
    <citation type="journal article" date="2005" name="J. Immunol.">
        <title>Mutational analysis of the human 2B4 (CD244)/CD48 interaction: Lys68 and Glu70 in the V domain of 2B4 are critical for CD48 binding and functional activation of NK cells.</title>
        <authorList>
            <person name="Mathew S.O."/>
            <person name="Kumaresan P.R."/>
            <person name="Lee J.K."/>
            <person name="Huynh V.T."/>
            <person name="Mathew P.A."/>
        </authorList>
    </citation>
    <scope>MUTAGENESIS OF LYS-68 AND GLU-70</scope>
</reference>
<reference key="23">
    <citation type="journal article" date="2009" name="Eur. J. Immunol.">
        <title>Functional role of human NK cell receptor 2B4 (CD244) isoforms.</title>
        <authorList>
            <person name="Mathew S.O."/>
            <person name="Rao K.K."/>
            <person name="Kim J.R."/>
            <person name="Bambard N.D."/>
            <person name="Mathew P.A."/>
        </authorList>
    </citation>
    <scope>ALTERNATIVE SPLICING (ISOFORMS 1 AND 2)</scope>
</reference>
<reference key="24">
    <citation type="journal article" date="2010" name="J. Immunol.">
        <title>The association of MHC class I proteins with the 2B4 receptor inhibits self-killing of human NK cells.</title>
        <authorList>
            <person name="Betser-Cohen G."/>
            <person name="Mizrahi S."/>
            <person name="Elboim M."/>
            <person name="Alsheich-Bartok O."/>
            <person name="Mandelboim O."/>
        </authorList>
    </citation>
    <scope>INTERACTION WITH MHC CLASS I PROTEINS</scope>
</reference>
<reference key="25">
    <citation type="journal article" date="2011" name="J. Biol. Chem.">
        <title>Glycosylation affects ligand binding and function of the activating natural killer cell receptor 2B4 (CD244) protein.</title>
        <authorList>
            <person name="Margraf-Schonfeld S."/>
            <person name="Bohm C."/>
            <person name="Watzl C."/>
        </authorList>
    </citation>
    <scope>GLYCOSYLATION AT ASN-71; ASN-77 AND ASN-89</scope>
</reference>
<reference key="26">
    <citation type="journal article" date="2014" name="PLoS ONE">
        <title>Fine specificity and molecular competition in SLAM family receptor signalling.</title>
        <authorList>
            <person name="Wilson T.J."/>
            <person name="Garner L.I."/>
            <person name="Metcalfe C."/>
            <person name="King E."/>
            <person name="Margraf S."/>
            <person name="Brown M.H."/>
        </authorList>
    </citation>
    <scope>INTERACTION WITH SH2D1A; SH2D1B AND INPP5D</scope>
    <scope>DOMAIN ITSM MOTIF</scope>
</reference>
<reference key="27">
    <citation type="journal article" date="2015" name="Immunology">
        <title>A polymorphism in a phosphotyrosine signalling motif of CD229 (Ly9, SLAMF3) alters SH2 domain binding and T-cell activation.</title>
        <authorList>
            <person name="Margraf S."/>
            <person name="Garner L.I."/>
            <person name="Wilson T.J."/>
            <person name="Brown M.H."/>
        </authorList>
    </citation>
    <scope>INTERACTION WITH SH2D1A AND INPP5D</scope>
    <scope>DOMAIN ITSM MOTIF</scope>
    <scope>PHOSPHORYLATION AT TYR-271 AND TYR-297</scope>
</reference>
<reference key="28">
    <citation type="journal article" date="2016" name="Open Biol.">
        <title>Modulation of natural killer cell functions by interactions between 2B4 and CD48 in cis and in trans.</title>
        <authorList>
            <person name="Claus M."/>
            <person name="Wingert S."/>
            <person name="Watzl C."/>
        </authorList>
    </citation>
    <scope>INTERACTION WITH CD48</scope>
</reference>
<comment type="function">
    <text evidence="1 7 10 11 13 15 25 37">Heterophilic receptor of the signaling lymphocytic activation molecule (SLAM) family; its ligand is CD48. SLAM receptors triggered by homo- or heterotypic cell-cell interactions are modulating the activation and differentiation of a wide variety of immune cells and thus are involved in the regulation and interconnection of both innate and adaptive immune response. Activities are controlled by presence or absence of small cytoplasmic adapter proteins, SH2D1A/SAP and/or SH2D1B/EAT-2. Acts as activating natural killer (NK) cell receptor (PubMed:10359122, PubMed:11714776, PubMed:8376943). Activating function implicates association with SH2D1A and FYN (PubMed:15713798). Downstreaming signaling involves predominantly VAV1, and, to a lesser degree, INPP5D/SHIP1 and CBL. Signal attenuation in the absence of SH2D1A is proposed to be dependent on INPP5D and to a lesser extent PTPN6/SHP-1 and PTPN11/SHP-2 (PubMed:10934222, PubMed:15713798). Stimulates NK cell cytotoxicity, production of IFN-gamma and granule exocytosis (PubMed:11714776, PubMed:8376943). Optimal expansion and activation of NK cells seems to be dependent on the engagement of CD244 with CD48 expressed on neighboring NK cells (By similarity). Acts as costimulator in NK activation by enhancing signals by other NK receptors such as NCR3 and NCR1 (PubMed:10741393). At early stages of NK cell differentiation may function as an inhibitory receptor possibly ensuring the self-tolerance of developing NK cells (PubMed:11917118). Involved in the regulation of CD8(+) T-cell proliferation; expression on activated T-cells and binding to CD48 provides costimulatory-like function for neighboring T-cells (By similarity). Inhibits inflammatory responses in dendritic cells (DCs) (By similarity).</text>
</comment>
<comment type="subunit">
    <text evidence="1 6 7 8 9 11 14 16 18 20 22 23 24 26">Interacts with CD48 (PubMed:27249817, PubMed:9841922). Interacts (via phosphorylated ITSM 1-4) with SH2D1A (via SH2 domain); SH2D1A probably mediates association with FYN. Interacts (via phosphorylated ITSM 3) with PTPN11/SHP-2, INPP5D/SHIP1, PTPN6/SHP-1 and CSK; binding of SH2D1A/SAP prevents association with PTPN11, PTPN6 and CSK; conflictingly a similar association has been described for phosphorylated ITSM 1 also including GRB2 and PLCG1. Interacts weakly (via phosphorylated ITSM 2) with PTPN11/SHP-2 and CSK (PubMed:10358138, PubMed:10934222, PubMed:12458214, PubMed:15713798, PubMed:24642916, PubMed:26221972). Interacts with SH2D1B (PubMed:12458214, PubMed:24642916). Interacts with PIK3R1; PI3K recruits SH2D1A (PubMed:11815622). Interacts with MHC class I proteins; the interaction is proposed to prevent self-killing of NK cells.</text>
</comment>
<comment type="interaction">
    <interactant intactId="EBI-1580565">
        <id>Q9BZW8</id>
    </interactant>
    <interactant intactId="EBI-714718">
        <id>P61769</id>
        <label>B2M</label>
    </interactant>
    <organismsDiffer>false</organismsDiffer>
    <experiments>2</experiments>
</comment>
<comment type="interaction">
    <interactant intactId="EBI-1580565">
        <id>Q9BZW8</id>
    </interactant>
    <interactant intactId="EBI-714770">
        <id>P09326</id>
        <label>CD48</label>
    </interactant>
    <organismsDiffer>false</organismsDiffer>
    <experiments>4</experiments>
</comment>
<comment type="interaction">
    <interactant intactId="EBI-1580565">
        <id>Q9BZW8</id>
    </interactant>
    <interactant intactId="EBI-1380477">
        <id>Q92835</id>
        <label>INPP5D</label>
    </interactant>
    <organismsDiffer>false</organismsDiffer>
    <experiments>6</experiments>
</comment>
<comment type="interaction">
    <interactant intactId="EBI-1580565">
        <id>Q9BZW8</id>
    </interactant>
    <interactant intactId="EBI-79387">
        <id>P19174</id>
        <label>PLCG1</label>
    </interactant>
    <organismsDiffer>false</organismsDiffer>
    <experiments>2</experiments>
</comment>
<comment type="interaction">
    <interactant intactId="EBI-1580565">
        <id>Q9BZW8</id>
    </interactant>
    <interactant intactId="EBI-297779">
        <id>Q06124</id>
        <label>PTPN11</label>
    </interactant>
    <organismsDiffer>false</organismsDiffer>
    <experiments>5</experiments>
</comment>
<comment type="interaction">
    <interactant intactId="EBI-1580565">
        <id>Q9BZW8</id>
    </interactant>
    <interactant intactId="EBI-78260">
        <id>P29350</id>
        <label>PTPN6</label>
    </interactant>
    <organismsDiffer>false</organismsDiffer>
    <experiments>2</experiments>
</comment>
<comment type="interaction">
    <interactant intactId="EBI-1580565">
        <id>Q9BZW8</id>
    </interactant>
    <interactant intactId="EBI-6983382">
        <id>O60880</id>
        <label>SH2D1A</label>
    </interactant>
    <organismsDiffer>false</organismsDiffer>
    <experiments>10</experiments>
</comment>
<comment type="interaction">
    <interactant intactId="EBI-1580565">
        <id>Q9BZW8</id>
    </interactant>
    <interactant intactId="EBI-15552052">
        <id>O60880-1</id>
        <label>SH2D1A</label>
    </interactant>
    <organismsDiffer>false</organismsDiffer>
    <experiments>2</experiments>
</comment>
<comment type="interaction">
    <interactant intactId="EBI-1580565">
        <id>Q9BZW8</id>
    </interactant>
    <interactant intactId="EBI-3923013">
        <id>O14796</id>
        <label>SH2D1B</label>
    </interactant>
    <organismsDiffer>false</organismsDiffer>
    <experiments>7</experiments>
</comment>
<comment type="subcellular location">
    <subcellularLocation>
        <location evidence="35">Membrane</location>
        <topology evidence="34">Single-pass type I membrane protein</topology>
    </subcellularLocation>
    <subcellularLocation>
        <location evidence="34">Cell membrane</location>
    </subcellularLocation>
    <subcellularLocation>
        <location evidence="12">Membrane raft</location>
    </subcellularLocation>
    <text evidence="12">Receptor engagement results in a recruitment to lipid drafts essential for the subsequent tyrosine phosphorylation of the ITSMs.</text>
</comment>
<comment type="alternative products">
    <event type="alternative splicing"/>
    <isoform>
        <id>Q9BZW8-1</id>
        <name>1</name>
        <name>H2B4-B</name>
        <sequence type="displayed"/>
    </isoform>
    <isoform>
        <id>Q9BZW8-2</id>
        <name>2</name>
        <name>H2B4-A</name>
        <sequence type="described" ref="VSP_010397"/>
    </isoform>
    <isoform>
        <id>Q9BZW8-3</id>
        <name>3</name>
        <name>H2B4</name>
        <sequence type="described" ref="VSP_010397 VSP_010399 VSP_010400"/>
    </isoform>
    <isoform>
        <id>Q9BZW8-4</id>
        <name>4</name>
        <name>H2B4b</name>
        <sequence type="described" ref="VSP_010398"/>
    </isoform>
</comment>
<comment type="tissue specificity">
    <text evidence="9 13 25">Expressed in spleen, PBL, followed by lung, liver, testis and small intestine. Expressed in all natural killer (NK) cells, monocytes and basophils, TCR-gamma/delta+ T-cells, monocytes, basophils, and on a subset of CD8(+) T-cells.</text>
</comment>
<comment type="domain">
    <text evidence="2 18 23">The ITSMs (immunoreceptor tyrosine-based switch motifs) with the consensus sequence T-X-Y-X-X-[VI] present in SLAM family receptors have overlapping specificity for activating and inhibitory SH2 domain-containing binding partners. Especially they mediate the interaction with the SH2 domain of SH2D1A and SH2D1B. A 'three-pronged' mechanism is proposed involving threonine (position -2), phosphorylated tyrosine (position 0) and valine/isoleucine (position +3).</text>
</comment>
<comment type="PTM">
    <text evidence="21">N-linked glycosylation is essential for the binding to its ligand CD48 (PubMed:21606496). Also O-glycosylated, in contrast, O-linked sialylation has a negative impact on ligand binding (PubMed:21606496).</text>
</comment>
<comment type="PTM">
    <text evidence="6 12">Phosphorylated by FYN and CSK on tyrosine residues following activation (PubMed:11034353). Coligation with inhibitory receptors such as KIR2DL1 inhibits phosphorylation upon contact of NK cells with sensitive target cells (PubMed:10358138).</text>
</comment>
<comment type="miscellaneous">
    <molecule>Isoform 2</molecule>
    <text evidence="34">Binds to CD48 with a stronger affinity than isoform 1, and interactions induces greater cytotoxicity and intracellular calcium release.</text>
</comment>
<dbReference type="EMBL" id="AF105261">
    <property type="protein sequence ID" value="AAD32538.1"/>
    <property type="molecule type" value="mRNA"/>
</dbReference>
<dbReference type="EMBL" id="AF117711">
    <property type="protein sequence ID" value="AAF28833.1"/>
    <property type="molecule type" value="mRNA"/>
</dbReference>
<dbReference type="EMBL" id="AF145782">
    <property type="protein sequence ID" value="AAD38951.1"/>
    <property type="molecule type" value="mRNA"/>
</dbReference>
<dbReference type="EMBL" id="AF107761">
    <property type="protein sequence ID" value="AAD37838.1"/>
    <property type="molecule type" value="mRNA"/>
</dbReference>
<dbReference type="EMBL" id="AF242540">
    <property type="protein sequence ID" value="AAK00233.1"/>
    <property type="molecule type" value="mRNA"/>
</dbReference>
<dbReference type="EMBL" id="AJ245376">
    <property type="protein sequence ID" value="CAC00648.1"/>
    <property type="molecule type" value="mRNA"/>
</dbReference>
<dbReference type="EMBL" id="AJ245377">
    <property type="protein sequence ID" value="CAC00649.1"/>
    <property type="molecule type" value="mRNA"/>
</dbReference>
<dbReference type="EMBL" id="AJ245375">
    <property type="protein sequence ID" value="CAC00647.1"/>
    <property type="molecule type" value="mRNA"/>
</dbReference>
<dbReference type="EMBL" id="AL354714">
    <property type="status" value="NOT_ANNOTATED_CDS"/>
    <property type="molecule type" value="Genomic_DNA"/>
</dbReference>
<dbReference type="EMBL" id="CH471121">
    <property type="protein sequence ID" value="EAW52691.1"/>
    <property type="molecule type" value="Genomic_DNA"/>
</dbReference>
<dbReference type="EMBL" id="CH471121">
    <property type="protein sequence ID" value="EAW52692.1"/>
    <property type="molecule type" value="Genomic_DNA"/>
</dbReference>
<dbReference type="EMBL" id="CH471121">
    <property type="protein sequence ID" value="EAW52693.1"/>
    <property type="molecule type" value="Genomic_DNA"/>
</dbReference>
<dbReference type="EMBL" id="BC028073">
    <property type="protein sequence ID" value="AAH28073.1"/>
    <property type="molecule type" value="mRNA"/>
</dbReference>
<dbReference type="EMBL" id="BC053985">
    <property type="protein sequence ID" value="AAH53985.1"/>
    <property type="molecule type" value="mRNA"/>
</dbReference>
<dbReference type="EMBL" id="AF363452">
    <property type="protein sequence ID" value="AAK50015.1"/>
    <property type="molecule type" value="mRNA"/>
</dbReference>
<dbReference type="CCDS" id="CCDS1210.1">
    <molecule id="Q9BZW8-2"/>
</dbReference>
<dbReference type="CCDS" id="CCDS53398.1">
    <molecule id="Q9BZW8-4"/>
</dbReference>
<dbReference type="CCDS" id="CCDS53399.1">
    <molecule id="Q9BZW8-1"/>
</dbReference>
<dbReference type="RefSeq" id="NP_001160135.1">
    <molecule id="Q9BZW8-1"/>
    <property type="nucleotide sequence ID" value="NM_001166663.2"/>
</dbReference>
<dbReference type="RefSeq" id="NP_001160136.1">
    <molecule id="Q9BZW8-4"/>
    <property type="nucleotide sequence ID" value="NM_001166664.2"/>
</dbReference>
<dbReference type="RefSeq" id="NP_057466.1">
    <molecule id="Q9BZW8-2"/>
    <property type="nucleotide sequence ID" value="NM_016382.4"/>
</dbReference>
<dbReference type="RefSeq" id="XP_011507924.1">
    <molecule id="Q9BZW8-3"/>
    <property type="nucleotide sequence ID" value="XM_011509622.3"/>
</dbReference>
<dbReference type="SMR" id="Q9BZW8"/>
<dbReference type="BioGRID" id="119709">
    <property type="interactions" value="39"/>
</dbReference>
<dbReference type="DIP" id="DIP-40331N"/>
<dbReference type="ELM" id="Q9BZW8"/>
<dbReference type="FunCoup" id="Q9BZW8">
    <property type="interactions" value="578"/>
</dbReference>
<dbReference type="IntAct" id="Q9BZW8">
    <property type="interactions" value="48"/>
</dbReference>
<dbReference type="MINT" id="Q9BZW8"/>
<dbReference type="STRING" id="9606.ENSP00000357012"/>
<dbReference type="GlyCosmos" id="Q9BZW8">
    <property type="glycosylation" value="8 sites, No reported glycans"/>
</dbReference>
<dbReference type="GlyGen" id="Q9BZW8">
    <property type="glycosylation" value="8 sites"/>
</dbReference>
<dbReference type="iPTMnet" id="Q9BZW8"/>
<dbReference type="PhosphoSitePlus" id="Q9BZW8"/>
<dbReference type="BioMuta" id="CD244"/>
<dbReference type="DMDM" id="47605541"/>
<dbReference type="jPOST" id="Q9BZW8"/>
<dbReference type="MassIVE" id="Q9BZW8"/>
<dbReference type="PaxDb" id="9606-ENSP00000357012"/>
<dbReference type="PeptideAtlas" id="Q9BZW8"/>
<dbReference type="ProteomicsDB" id="79913">
    <molecule id="Q9BZW8-1"/>
</dbReference>
<dbReference type="ProteomicsDB" id="79914">
    <molecule id="Q9BZW8-2"/>
</dbReference>
<dbReference type="ProteomicsDB" id="79915">
    <molecule id="Q9BZW8-3"/>
</dbReference>
<dbReference type="ProteomicsDB" id="79916">
    <molecule id="Q9BZW8-4"/>
</dbReference>
<dbReference type="Antibodypedia" id="2392">
    <property type="antibodies" value="853 antibodies from 43 providers"/>
</dbReference>
<dbReference type="DNASU" id="51744"/>
<dbReference type="Ensembl" id="ENST00000322302.7">
    <molecule id="Q9BZW8-4"/>
    <property type="protein sequence ID" value="ENSP00000313619.7"/>
    <property type="gene ID" value="ENSG00000122223.13"/>
</dbReference>
<dbReference type="Ensembl" id="ENST00000368033.7">
    <molecule id="Q9BZW8-1"/>
    <property type="protein sequence ID" value="ENSP00000357012.3"/>
    <property type="gene ID" value="ENSG00000122223.13"/>
</dbReference>
<dbReference type="Ensembl" id="ENST00000368034.9">
    <molecule id="Q9BZW8-2"/>
    <property type="protein sequence ID" value="ENSP00000357013.4"/>
    <property type="gene ID" value="ENSG00000122223.13"/>
</dbReference>
<dbReference type="Ensembl" id="ENST00000492063.5">
    <molecule id="Q9BZW8-3"/>
    <property type="protein sequence ID" value="ENSP00000432636.1"/>
    <property type="gene ID" value="ENSG00000122223.13"/>
</dbReference>
<dbReference type="GeneID" id="51744"/>
<dbReference type="KEGG" id="hsa:51744"/>
<dbReference type="MANE-Select" id="ENST00000368034.9">
    <molecule id="Q9BZW8-2"/>
    <property type="protein sequence ID" value="ENSP00000357013.4"/>
    <property type="RefSeq nucleotide sequence ID" value="NM_016382.4"/>
    <property type="RefSeq protein sequence ID" value="NP_057466.1"/>
</dbReference>
<dbReference type="UCSC" id="uc001fxa.4">
    <molecule id="Q9BZW8-1"/>
    <property type="organism name" value="human"/>
</dbReference>
<dbReference type="AGR" id="HGNC:18171"/>
<dbReference type="CTD" id="51744"/>
<dbReference type="DisGeNET" id="51744"/>
<dbReference type="GeneCards" id="CD244"/>
<dbReference type="HGNC" id="HGNC:18171">
    <property type="gene designation" value="CD244"/>
</dbReference>
<dbReference type="HPA" id="ENSG00000122223">
    <property type="expression patterns" value="Tissue enhanced (bone marrow, lymphoid tissue)"/>
</dbReference>
<dbReference type="MalaCards" id="CD244"/>
<dbReference type="MIM" id="605554">
    <property type="type" value="gene"/>
</dbReference>
<dbReference type="neXtProt" id="NX_Q9BZW8"/>
<dbReference type="OpenTargets" id="ENSG00000122223"/>
<dbReference type="PharmGKB" id="PA134905192"/>
<dbReference type="VEuPathDB" id="HostDB:ENSG00000122223"/>
<dbReference type="eggNOG" id="ENOG502S7N7">
    <property type="taxonomic scope" value="Eukaryota"/>
</dbReference>
<dbReference type="GeneTree" id="ENSGT01030000234540"/>
<dbReference type="HOGENOM" id="CLU_065827_0_0_1"/>
<dbReference type="InParanoid" id="Q9BZW8"/>
<dbReference type="OMA" id="VDIHGTH"/>
<dbReference type="OrthoDB" id="8955135at2759"/>
<dbReference type="PAN-GO" id="Q9BZW8">
    <property type="GO annotations" value="3 GO annotations based on evolutionary models"/>
</dbReference>
<dbReference type="PhylomeDB" id="Q9BZW8"/>
<dbReference type="TreeFam" id="TF334964"/>
<dbReference type="PathwayCommons" id="Q9BZW8"/>
<dbReference type="Reactome" id="R-HSA-202733">
    <property type="pathway name" value="Cell surface interactions at the vascular wall"/>
</dbReference>
<dbReference type="SignaLink" id="Q9BZW8"/>
<dbReference type="BioGRID-ORCS" id="51744">
    <property type="hits" value="19 hits in 1143 CRISPR screens"/>
</dbReference>
<dbReference type="GeneWiki" id="CD244"/>
<dbReference type="GenomeRNAi" id="51744"/>
<dbReference type="Pharos" id="Q9BZW8">
    <property type="development level" value="Tbio"/>
</dbReference>
<dbReference type="PRO" id="PR:Q9BZW8"/>
<dbReference type="Proteomes" id="UP000005640">
    <property type="component" value="Chromosome 1"/>
</dbReference>
<dbReference type="RNAct" id="Q9BZW8">
    <property type="molecule type" value="protein"/>
</dbReference>
<dbReference type="Bgee" id="ENSG00000122223">
    <property type="expression patterns" value="Expressed in granulocyte and 105 other cell types or tissues"/>
</dbReference>
<dbReference type="GO" id="GO:0009897">
    <property type="term" value="C:external side of plasma membrane"/>
    <property type="evidence" value="ECO:0000314"/>
    <property type="project" value="MGI"/>
</dbReference>
<dbReference type="GO" id="GO:0045121">
    <property type="term" value="C:membrane raft"/>
    <property type="evidence" value="ECO:0007669"/>
    <property type="project" value="UniProtKB-SubCell"/>
</dbReference>
<dbReference type="GO" id="GO:0005886">
    <property type="term" value="C:plasma membrane"/>
    <property type="evidence" value="ECO:0000304"/>
    <property type="project" value="Reactome"/>
</dbReference>
<dbReference type="GO" id="GO:0042288">
    <property type="term" value="F:MHC class I protein binding"/>
    <property type="evidence" value="ECO:0000314"/>
    <property type="project" value="UniProtKB"/>
</dbReference>
<dbReference type="GO" id="GO:0038023">
    <property type="term" value="F:signaling receptor activity"/>
    <property type="evidence" value="ECO:0000314"/>
    <property type="project" value="UniProt"/>
</dbReference>
<dbReference type="GO" id="GO:0002250">
    <property type="term" value="P:adaptive immune response"/>
    <property type="evidence" value="ECO:0007669"/>
    <property type="project" value="UniProtKB-KW"/>
</dbReference>
<dbReference type="GO" id="GO:0006955">
    <property type="term" value="P:immune response"/>
    <property type="evidence" value="ECO:0000318"/>
    <property type="project" value="GO_Central"/>
</dbReference>
<dbReference type="GO" id="GO:0030101">
    <property type="term" value="P:natural killer cell activation"/>
    <property type="evidence" value="ECO:0000314"/>
    <property type="project" value="UniProt"/>
</dbReference>
<dbReference type="GO" id="GO:0002323">
    <property type="term" value="P:natural killer cell activation involved in immune response"/>
    <property type="evidence" value="ECO:0000314"/>
    <property type="project" value="UniProtKB"/>
</dbReference>
<dbReference type="GO" id="GO:0071663">
    <property type="term" value="P:positive regulation of granzyme B production"/>
    <property type="evidence" value="ECO:0000314"/>
    <property type="project" value="UniProtKB"/>
</dbReference>
<dbReference type="GO" id="GO:0060732">
    <property type="term" value="P:positive regulation of inositol phosphate biosynthetic process"/>
    <property type="evidence" value="ECO:0000314"/>
    <property type="project" value="UniProtKB"/>
</dbReference>
<dbReference type="GO" id="GO:0032757">
    <property type="term" value="P:positive regulation of interleukin-8 production"/>
    <property type="evidence" value="ECO:0000314"/>
    <property type="project" value="UniProtKB"/>
</dbReference>
<dbReference type="GO" id="GO:0032729">
    <property type="term" value="P:positive regulation of type II interferon production"/>
    <property type="evidence" value="ECO:0000314"/>
    <property type="project" value="UniProtKB"/>
</dbReference>
<dbReference type="GO" id="GO:0007165">
    <property type="term" value="P:signal transduction"/>
    <property type="evidence" value="ECO:0000304"/>
    <property type="project" value="ProtInc"/>
</dbReference>
<dbReference type="FunFam" id="2.60.40.10:FF:001735">
    <property type="entry name" value="CD244 molecule A"/>
    <property type="match status" value="1"/>
</dbReference>
<dbReference type="Gene3D" id="2.60.40.10">
    <property type="entry name" value="Immunoglobulins"/>
    <property type="match status" value="2"/>
</dbReference>
<dbReference type="InterPro" id="IPR015631">
    <property type="entry name" value="CD2/SLAM_rcpt"/>
</dbReference>
<dbReference type="InterPro" id="IPR007110">
    <property type="entry name" value="Ig-like_dom"/>
</dbReference>
<dbReference type="InterPro" id="IPR036179">
    <property type="entry name" value="Ig-like_dom_sf"/>
</dbReference>
<dbReference type="InterPro" id="IPR013783">
    <property type="entry name" value="Ig-like_fold"/>
</dbReference>
<dbReference type="InterPro" id="IPR024303">
    <property type="entry name" value="NK_rcpt_2B4_Ig_dom"/>
</dbReference>
<dbReference type="PANTHER" id="PTHR12080:SF56">
    <property type="entry name" value="NATURAL KILLER CELL RECEPTOR 2B4"/>
    <property type="match status" value="1"/>
</dbReference>
<dbReference type="PANTHER" id="PTHR12080">
    <property type="entry name" value="SIGNALING LYMPHOCYTIC ACTIVATION MOLECULE"/>
    <property type="match status" value="1"/>
</dbReference>
<dbReference type="Pfam" id="PF11465">
    <property type="entry name" value="Receptor_2B4"/>
    <property type="match status" value="1"/>
</dbReference>
<dbReference type="SUPFAM" id="SSF48726">
    <property type="entry name" value="Immunoglobulin"/>
    <property type="match status" value="2"/>
</dbReference>
<dbReference type="PROSITE" id="PS50835">
    <property type="entry name" value="IG_LIKE"/>
    <property type="match status" value="1"/>
</dbReference>
<name>CD244_HUMAN</name>
<keyword id="KW-1064">Adaptive immunity</keyword>
<keyword id="KW-0025">Alternative splicing</keyword>
<keyword id="KW-1003">Cell membrane</keyword>
<keyword id="KW-0903">Direct protein sequencing</keyword>
<keyword id="KW-1015">Disulfide bond</keyword>
<keyword id="KW-0325">Glycoprotein</keyword>
<keyword id="KW-0391">Immunity</keyword>
<keyword id="KW-0393">Immunoglobulin domain</keyword>
<keyword id="KW-0399">Innate immunity</keyword>
<keyword id="KW-0472">Membrane</keyword>
<keyword id="KW-0597">Phosphoprotein</keyword>
<keyword id="KW-1267">Proteomics identification</keyword>
<keyword id="KW-0675">Receptor</keyword>
<keyword id="KW-1185">Reference proteome</keyword>
<keyword id="KW-0677">Repeat</keyword>
<keyword id="KW-0732">Signal</keyword>
<keyword id="KW-0812">Transmembrane</keyword>
<keyword id="KW-1133">Transmembrane helix</keyword>
<feature type="signal peptide" evidence="9 17">
    <location>
        <begin position="1"/>
        <end position="21"/>
    </location>
</feature>
<feature type="chain" id="PRO_0000014668" description="Natural killer cell receptor 2B4">
    <location>
        <begin position="22"/>
        <end position="370"/>
    </location>
</feature>
<feature type="topological domain" description="Extracellular" evidence="3">
    <location>
        <begin position="22"/>
        <end position="229"/>
    </location>
</feature>
<feature type="transmembrane region" description="Helical" evidence="3">
    <location>
        <begin position="230"/>
        <end position="250"/>
    </location>
</feature>
<feature type="topological domain" description="Cytoplasmic" evidence="3">
    <location>
        <begin position="251"/>
        <end position="370"/>
    </location>
</feature>
<feature type="domain" description="Ig-like 1">
    <location>
        <begin position="22"/>
        <end position="127"/>
    </location>
</feature>
<feature type="domain" description="Ig-like 2">
    <location>
        <begin position="131"/>
        <end position="215"/>
    </location>
</feature>
<feature type="region of interest" description="Disordered" evidence="5">
    <location>
        <begin position="324"/>
        <end position="370"/>
    </location>
</feature>
<feature type="short sequence motif" description="ITSM 1" evidence="2">
    <location>
        <begin position="269"/>
        <end position="274"/>
    </location>
</feature>
<feature type="short sequence motif" description="ITSM 2" evidence="2">
    <location>
        <begin position="295"/>
        <end position="300"/>
    </location>
</feature>
<feature type="short sequence motif" description="ITSM 3" evidence="2">
    <location>
        <begin position="315"/>
        <end position="320"/>
    </location>
</feature>
<feature type="short sequence motif" description="ITSM 4" evidence="2">
    <location>
        <begin position="340"/>
        <end position="345"/>
    </location>
</feature>
<feature type="modified residue" description="Phosphotyrosine" evidence="36 37 38">
    <location>
        <position position="271"/>
    </location>
</feature>
<feature type="modified residue" description="Phosphotyrosine; by FYN" evidence="36 37 38">
    <location>
        <position position="297"/>
    </location>
</feature>
<feature type="modified residue" description="Phosphotyrosine" evidence="36 37">
    <location>
        <position position="317"/>
    </location>
</feature>
<feature type="modified residue" description="Phosphotyrosine; by FYN" evidence="36 37">
    <location>
        <position position="342"/>
    </location>
</feature>
<feature type="glycosylation site" description="N-linked (GlcNAc...) asparagine" evidence="21">
    <location>
        <position position="71"/>
    </location>
</feature>
<feature type="glycosylation site" description="N-linked (GlcNAc...) asparagine" evidence="21">
    <location>
        <position position="77"/>
    </location>
</feature>
<feature type="glycosylation site" description="N-linked (GlcNAc...) asparagine" evidence="21">
    <location>
        <position position="89"/>
    </location>
</feature>
<feature type="glycosylation site" description="N-linked (GlcNAc...) asparagine" evidence="3">
    <location>
        <position position="164"/>
    </location>
</feature>
<feature type="glycosylation site" description="N-linked (GlcNAc...) asparagine" evidence="3">
    <location>
        <position position="181"/>
    </location>
</feature>
<feature type="glycosylation site" description="N-linked (GlcNAc...) asparagine" evidence="3">
    <location>
        <position position="192"/>
    </location>
</feature>
<feature type="glycosylation site" description="N-linked (GlcNAc...) asparagine" evidence="3">
    <location>
        <position position="200"/>
    </location>
</feature>
<feature type="glycosylation site" description="N-linked (GlcNAc...) asparagine" evidence="3">
    <location>
        <position position="213"/>
    </location>
</feature>
<feature type="disulfide bond" evidence="4">
    <location>
        <begin position="157"/>
        <end position="199"/>
    </location>
</feature>
<feature type="splice variant" id="VSP_010397" description="In isoform 2 and isoform 3." evidence="27 28 29 30 31 32 33">
    <location>
        <begin position="127"/>
        <end position="131"/>
    </location>
</feature>
<feature type="splice variant" id="VSP_010398" description="In isoform 4." evidence="31">
    <location>
        <begin position="128"/>
        <end position="224"/>
    </location>
</feature>
<feature type="splice variant" id="VSP_010399" description="In isoform 3." evidence="31">
    <original>SGSRKRNHS</original>
    <variation>GDRFYSFSG</variation>
    <location>
        <begin position="326"/>
        <end position="334"/>
    </location>
</feature>
<feature type="splice variant" id="VSP_010400" description="In isoform 3." evidence="31">
    <location>
        <begin position="335"/>
        <end position="370"/>
    </location>
</feature>
<feature type="sequence variant" id="VAR_056036" description="In dbSNP:rs34846692.">
    <original>N</original>
    <variation>D</variation>
    <location>
        <position position="89"/>
    </location>
</feature>
<feature type="sequence variant" id="VAR_056037" description="In dbSNP:rs12064925.">
    <original>S</original>
    <variation>F</variation>
    <location>
        <position position="323"/>
    </location>
</feature>
<feature type="mutagenesis site" description="Disrupts interaction with CD48; when associated with A-70." evidence="19">
    <original>K</original>
    <variation>A</variation>
    <location>
        <position position="68"/>
    </location>
</feature>
<feature type="mutagenesis site" description="Disrupts interaction with CD48; when associated with A-68." evidence="19">
    <original>E</original>
    <variation>A</variation>
    <location>
        <position position="70"/>
    </location>
</feature>
<feature type="sequence conflict" description="In Ref. 10; AAK50015." evidence="34" ref="10">
    <original>ESLLPDK</original>
    <variation>GMAMCPM</variation>
    <location>
        <begin position="127"/>
        <end position="133"/>
    </location>
</feature>
<gene>
    <name type="primary">CD244</name>
    <name type="synonym">2B4</name>
</gene>
<accession>Q9BZW8</accession>
<accession>Q5VYI2</accession>
<accession>Q5VYI6</accession>
<accession>Q5VYI7</accession>
<accession>Q96T47</accession>
<accession>Q9NQD2</accession>
<accession>Q9NQD3</accession>
<accession>Q9Y288</accession>
<protein>
    <recommendedName>
        <fullName>Natural killer cell receptor 2B4</fullName>
    </recommendedName>
    <alternativeName>
        <fullName>NK cell activation-inducing ligand</fullName>
        <shortName>NAIL</shortName>
    </alternativeName>
    <alternativeName>
        <fullName>NK cell type I receptor protein 2B4</fullName>
        <shortName>NKR2B4</shortName>
        <shortName>h2B4</shortName>
    </alternativeName>
    <alternativeName>
        <fullName>SLAM family member 4</fullName>
        <shortName>SLAMF4</shortName>
    </alternativeName>
    <alternativeName>
        <fullName>Signaling lymphocytic activation molecule 4</fullName>
    </alternativeName>
    <cdAntigenName>CD244</cdAntigenName>
</protein>